<keyword id="KW-0328">Glycosyltransferase</keyword>
<keyword id="KW-0808">Transferase</keyword>
<comment type="function">
    <text evidence="1">Catalyzes the phosphorolysis of diverse nucleosides, yielding D-ribose 1-phosphate and the respective free bases. Can use uridine, adenosine, guanosine, cytidine, thymidine, inosine and xanthosine as substrates. Also catalyzes the reverse reactions.</text>
</comment>
<comment type="catalytic activity">
    <reaction evidence="1">
        <text>a purine D-ribonucleoside + phosphate = a purine nucleobase + alpha-D-ribose 1-phosphate</text>
        <dbReference type="Rhea" id="RHEA:19805"/>
        <dbReference type="ChEBI" id="CHEBI:26386"/>
        <dbReference type="ChEBI" id="CHEBI:43474"/>
        <dbReference type="ChEBI" id="CHEBI:57720"/>
        <dbReference type="ChEBI" id="CHEBI:142355"/>
        <dbReference type="EC" id="2.4.2.1"/>
    </reaction>
</comment>
<comment type="catalytic activity">
    <reaction evidence="1">
        <text>adenosine + phosphate = alpha-D-ribose 1-phosphate + adenine</text>
        <dbReference type="Rhea" id="RHEA:27642"/>
        <dbReference type="ChEBI" id="CHEBI:16335"/>
        <dbReference type="ChEBI" id="CHEBI:16708"/>
        <dbReference type="ChEBI" id="CHEBI:43474"/>
        <dbReference type="ChEBI" id="CHEBI:57720"/>
        <dbReference type="EC" id="2.4.2.1"/>
    </reaction>
</comment>
<comment type="catalytic activity">
    <reaction evidence="1">
        <text>cytidine + phosphate = cytosine + alpha-D-ribose 1-phosphate</text>
        <dbReference type="Rhea" id="RHEA:52540"/>
        <dbReference type="ChEBI" id="CHEBI:16040"/>
        <dbReference type="ChEBI" id="CHEBI:17562"/>
        <dbReference type="ChEBI" id="CHEBI:43474"/>
        <dbReference type="ChEBI" id="CHEBI:57720"/>
        <dbReference type="EC" id="2.4.2.2"/>
    </reaction>
</comment>
<comment type="catalytic activity">
    <reaction evidence="1">
        <text>guanosine + phosphate = alpha-D-ribose 1-phosphate + guanine</text>
        <dbReference type="Rhea" id="RHEA:13233"/>
        <dbReference type="ChEBI" id="CHEBI:16235"/>
        <dbReference type="ChEBI" id="CHEBI:16750"/>
        <dbReference type="ChEBI" id="CHEBI:43474"/>
        <dbReference type="ChEBI" id="CHEBI:57720"/>
        <dbReference type="EC" id="2.4.2.1"/>
    </reaction>
</comment>
<comment type="catalytic activity">
    <reaction evidence="1">
        <text>inosine + phosphate = alpha-D-ribose 1-phosphate + hypoxanthine</text>
        <dbReference type="Rhea" id="RHEA:27646"/>
        <dbReference type="ChEBI" id="CHEBI:17368"/>
        <dbReference type="ChEBI" id="CHEBI:17596"/>
        <dbReference type="ChEBI" id="CHEBI:43474"/>
        <dbReference type="ChEBI" id="CHEBI:57720"/>
        <dbReference type="EC" id="2.4.2.1"/>
    </reaction>
</comment>
<comment type="catalytic activity">
    <reaction evidence="1">
        <text>thymidine + phosphate = 2-deoxy-alpha-D-ribose 1-phosphate + thymine</text>
        <dbReference type="Rhea" id="RHEA:16037"/>
        <dbReference type="ChEBI" id="CHEBI:17748"/>
        <dbReference type="ChEBI" id="CHEBI:17821"/>
        <dbReference type="ChEBI" id="CHEBI:43474"/>
        <dbReference type="ChEBI" id="CHEBI:57259"/>
        <dbReference type="EC" id="2.4.2.2"/>
    </reaction>
</comment>
<comment type="catalytic activity">
    <reaction evidence="1">
        <text>uridine + phosphate = alpha-D-ribose 1-phosphate + uracil</text>
        <dbReference type="Rhea" id="RHEA:24388"/>
        <dbReference type="ChEBI" id="CHEBI:16704"/>
        <dbReference type="ChEBI" id="CHEBI:17568"/>
        <dbReference type="ChEBI" id="CHEBI:43474"/>
        <dbReference type="ChEBI" id="CHEBI:57720"/>
        <dbReference type="EC" id="2.4.2.2"/>
    </reaction>
</comment>
<comment type="catalytic activity">
    <reaction evidence="1">
        <text>xanthosine + phosphate = alpha-D-ribose 1-phosphate + xanthine</text>
        <dbReference type="Rhea" id="RHEA:27638"/>
        <dbReference type="ChEBI" id="CHEBI:17712"/>
        <dbReference type="ChEBI" id="CHEBI:18107"/>
        <dbReference type="ChEBI" id="CHEBI:43474"/>
        <dbReference type="ChEBI" id="CHEBI:57720"/>
        <dbReference type="EC" id="2.4.2.1"/>
    </reaction>
</comment>
<comment type="similarity">
    <text evidence="1">Belongs to the nucleoside phosphorylase PpnP family.</text>
</comment>
<proteinExistence type="inferred from homology"/>
<organism>
    <name type="scientific">Janthinobacterium sp. (strain Marseille)</name>
    <name type="common">Minibacterium massiliensis</name>
    <dbReference type="NCBI Taxonomy" id="375286"/>
    <lineage>
        <taxon>Bacteria</taxon>
        <taxon>Pseudomonadati</taxon>
        <taxon>Pseudomonadota</taxon>
        <taxon>Betaproteobacteria</taxon>
        <taxon>Burkholderiales</taxon>
        <taxon>Oxalobacteraceae</taxon>
        <taxon>Janthinobacterium</taxon>
    </lineage>
</organism>
<dbReference type="EC" id="2.4.2.1" evidence="1"/>
<dbReference type="EC" id="2.4.2.2" evidence="1"/>
<dbReference type="EMBL" id="CP000269">
    <property type="protein sequence ID" value="ABR90311.1"/>
    <property type="molecule type" value="Genomic_DNA"/>
</dbReference>
<dbReference type="RefSeq" id="WP_012078710.1">
    <property type="nucleotide sequence ID" value="NC_009659.1"/>
</dbReference>
<dbReference type="SMR" id="A6SW89"/>
<dbReference type="STRING" id="375286.mma_0846"/>
<dbReference type="KEGG" id="mms:mma_0846"/>
<dbReference type="eggNOG" id="COG3123">
    <property type="taxonomic scope" value="Bacteria"/>
</dbReference>
<dbReference type="HOGENOM" id="CLU_157874_1_0_4"/>
<dbReference type="OrthoDB" id="9793848at2"/>
<dbReference type="Proteomes" id="UP000006388">
    <property type="component" value="Chromosome"/>
</dbReference>
<dbReference type="GO" id="GO:0005829">
    <property type="term" value="C:cytosol"/>
    <property type="evidence" value="ECO:0007669"/>
    <property type="project" value="TreeGrafter"/>
</dbReference>
<dbReference type="GO" id="GO:0047975">
    <property type="term" value="F:guanosine phosphorylase activity"/>
    <property type="evidence" value="ECO:0007669"/>
    <property type="project" value="UniProtKB-EC"/>
</dbReference>
<dbReference type="GO" id="GO:0004731">
    <property type="term" value="F:purine-nucleoside phosphorylase activity"/>
    <property type="evidence" value="ECO:0007669"/>
    <property type="project" value="UniProtKB-UniRule"/>
</dbReference>
<dbReference type="GO" id="GO:0009032">
    <property type="term" value="F:thymidine phosphorylase activity"/>
    <property type="evidence" value="ECO:0007669"/>
    <property type="project" value="UniProtKB-EC"/>
</dbReference>
<dbReference type="GO" id="GO:0004850">
    <property type="term" value="F:uridine phosphorylase activity"/>
    <property type="evidence" value="ECO:0007669"/>
    <property type="project" value="UniProtKB-EC"/>
</dbReference>
<dbReference type="CDD" id="cd20296">
    <property type="entry name" value="cupin_PpnP-like"/>
    <property type="match status" value="1"/>
</dbReference>
<dbReference type="Gene3D" id="2.60.120.10">
    <property type="entry name" value="Jelly Rolls"/>
    <property type="match status" value="1"/>
</dbReference>
<dbReference type="HAMAP" id="MF_01537">
    <property type="entry name" value="Nucleos_phosphorylase_PpnP"/>
    <property type="match status" value="1"/>
</dbReference>
<dbReference type="InterPro" id="IPR009664">
    <property type="entry name" value="Ppnp"/>
</dbReference>
<dbReference type="InterPro" id="IPR014710">
    <property type="entry name" value="RmlC-like_jellyroll"/>
</dbReference>
<dbReference type="InterPro" id="IPR011051">
    <property type="entry name" value="RmlC_Cupin_sf"/>
</dbReference>
<dbReference type="PANTHER" id="PTHR36540">
    <property type="entry name" value="PYRIMIDINE/PURINE NUCLEOSIDE PHOSPHORYLASE"/>
    <property type="match status" value="1"/>
</dbReference>
<dbReference type="PANTHER" id="PTHR36540:SF1">
    <property type="entry name" value="PYRIMIDINE_PURINE NUCLEOSIDE PHOSPHORYLASE"/>
    <property type="match status" value="1"/>
</dbReference>
<dbReference type="Pfam" id="PF06865">
    <property type="entry name" value="Ppnp"/>
    <property type="match status" value="1"/>
</dbReference>
<dbReference type="SUPFAM" id="SSF51182">
    <property type="entry name" value="RmlC-like cupins"/>
    <property type="match status" value="1"/>
</dbReference>
<sequence>MSTQFDQVSVIKKANIYFDGKCVSHSVLFADGTKKTIGVIFPSTLKFNTGAAEIMELNAGKCRIRLAGATDWETYEGGQQFNVPANSSFDIETIDTLDYVCHFV</sequence>
<gene>
    <name evidence="1" type="primary">ppnP</name>
    <name type="ordered locus">mma_0846</name>
</gene>
<evidence type="ECO:0000255" key="1">
    <source>
        <dbReference type="HAMAP-Rule" id="MF_01537"/>
    </source>
</evidence>
<reference key="1">
    <citation type="journal article" date="2007" name="PLoS Genet.">
        <title>Genome analysis of Minibacterium massiliensis highlights the convergent evolution of water-living bacteria.</title>
        <authorList>
            <person name="Audic S."/>
            <person name="Robert C."/>
            <person name="Campagna B."/>
            <person name="Parinello H."/>
            <person name="Claverie J.-M."/>
            <person name="Raoult D."/>
            <person name="Drancourt M."/>
        </authorList>
    </citation>
    <scope>NUCLEOTIDE SEQUENCE [LARGE SCALE GENOMIC DNA]</scope>
    <source>
        <strain>Marseille</strain>
    </source>
</reference>
<accession>A6SW89</accession>
<feature type="chain" id="PRO_1000068731" description="Pyrimidine/purine nucleoside phosphorylase">
    <location>
        <begin position="1"/>
        <end position="104"/>
    </location>
</feature>
<name>PPNP_JANMA</name>
<protein>
    <recommendedName>
        <fullName evidence="1">Pyrimidine/purine nucleoside phosphorylase</fullName>
        <ecNumber evidence="1">2.4.2.1</ecNumber>
        <ecNumber evidence="1">2.4.2.2</ecNumber>
    </recommendedName>
    <alternativeName>
        <fullName evidence="1">Adenosine phosphorylase</fullName>
    </alternativeName>
    <alternativeName>
        <fullName evidence="1">Cytidine phosphorylase</fullName>
    </alternativeName>
    <alternativeName>
        <fullName evidence="1">Guanosine phosphorylase</fullName>
    </alternativeName>
    <alternativeName>
        <fullName evidence="1">Inosine phosphorylase</fullName>
    </alternativeName>
    <alternativeName>
        <fullName evidence="1">Thymidine phosphorylase</fullName>
    </alternativeName>
    <alternativeName>
        <fullName evidence="1">Uridine phosphorylase</fullName>
    </alternativeName>
    <alternativeName>
        <fullName evidence="1">Xanthosine phosphorylase</fullName>
    </alternativeName>
</protein>